<proteinExistence type="evidence at protein level"/>
<organism>
    <name type="scientific">Thermus thermophilus (strain ATCC 27634 / DSM 579 / HB8)</name>
    <dbReference type="NCBI Taxonomy" id="300852"/>
    <lineage>
        <taxon>Bacteria</taxon>
        <taxon>Thermotogati</taxon>
        <taxon>Deinococcota</taxon>
        <taxon>Deinococci</taxon>
        <taxon>Thermales</taxon>
        <taxon>Thermaceae</taxon>
        <taxon>Thermus</taxon>
    </lineage>
</organism>
<evidence type="ECO:0000250" key="1"/>
<evidence type="ECO:0000250" key="2">
    <source>
        <dbReference type="UniProtKB" id="Q72IW9"/>
    </source>
</evidence>
<evidence type="ECO:0000269" key="3">
    <source>
    </source>
</evidence>
<evidence type="ECO:0000303" key="4">
    <source>
    </source>
</evidence>
<evidence type="ECO:0000305" key="5"/>
<evidence type="ECO:0000305" key="6">
    <source>
    </source>
</evidence>
<evidence type="ECO:0007829" key="7">
    <source>
        <dbReference type="PDB" id="3ASJ"/>
    </source>
</evidence>
<sequence>MAYRICLIEGDGIGHEVIPAARRVLEATGLPLEFVEAEAGWETFERRGTSVPEETVEKILSCHATLFGAATSPTRKVPGFFGAIRYLRRRLDLYANVRPAKSRPVPGSRPGVDLVIVRENTEGLYVEQERRYLDVAIADAVISKKASERIGRAALRIAEGRPRKTLHIAHKANVLPLTQGLFLDTVKEVAKDFPLVNVQDIIVDNCAMQLVMRPERFDVIVTTNLLGDILSDLAAGLVGGLGLAPSGNIGDTTAVFEPVHGSAPDIAGKGIANPTAAILSAAMMLDYLGEKEAAKRVEKAVDLVLERGPRTPDLGGDATTEAFTEAVVEALKSL</sequence>
<comment type="function">
    <text evidence="2 3">Catalyzes the NAD(+)-dependent oxidative decarboxylation of homoisocitrate to 2-oxoadipate (alpha-ketoadipate), a reaction involved in lysine biosynthesis through the alpha-aminoadipate pathway (PubMed:21813504). In addition, has high activity with isocitrate, but is inactive with 3-isopropylmalate (By similarity).</text>
</comment>
<comment type="catalytic activity">
    <reaction evidence="3">
        <text>(2R,3S)-homoisocitrate + NAD(+) = 2-oxoadipate + CO2 + NADH</text>
        <dbReference type="Rhea" id="RHEA:11900"/>
        <dbReference type="ChEBI" id="CHEBI:15404"/>
        <dbReference type="ChEBI" id="CHEBI:16526"/>
        <dbReference type="ChEBI" id="CHEBI:57499"/>
        <dbReference type="ChEBI" id="CHEBI:57540"/>
        <dbReference type="ChEBI" id="CHEBI:57945"/>
        <dbReference type="EC" id="1.1.1.286"/>
    </reaction>
    <physiologicalReaction direction="left-to-right" evidence="6">
        <dbReference type="Rhea" id="RHEA:11901"/>
    </physiologicalReaction>
</comment>
<comment type="catalytic activity">
    <reaction evidence="2">
        <text>D-threo-isocitrate + NAD(+) = 2-oxoglutarate + CO2 + NADH</text>
        <dbReference type="Rhea" id="RHEA:23632"/>
        <dbReference type="ChEBI" id="CHEBI:15562"/>
        <dbReference type="ChEBI" id="CHEBI:16526"/>
        <dbReference type="ChEBI" id="CHEBI:16810"/>
        <dbReference type="ChEBI" id="CHEBI:57540"/>
        <dbReference type="ChEBI" id="CHEBI:57945"/>
        <dbReference type="EC" id="1.1.1.286"/>
    </reaction>
    <physiologicalReaction direction="left-to-right" evidence="2">
        <dbReference type="Rhea" id="RHEA:23633"/>
    </physiologicalReaction>
</comment>
<comment type="cofactor">
    <cofactor evidence="3">
        <name>Mg(2+)</name>
        <dbReference type="ChEBI" id="CHEBI:18420"/>
    </cofactor>
    <text evidence="3">Binds 1 Mg(2+) ion per subunit.</text>
</comment>
<comment type="activity regulation">
    <text evidence="3">Competitively inhibited by (2S,3S)-thiahomoisocitrate in vitro.</text>
</comment>
<comment type="pathway">
    <text>Amino-acid biosynthesis; L-lysine biosynthesis via AAA pathway; L-alpha-aminoadipate from 2-oxoglutarate: step 4/5.</text>
</comment>
<comment type="subunit">
    <text evidence="3">Homotetramer. Dimer of dimers. The homotetramer can transiently dissociate into homodimers.</text>
</comment>
<comment type="similarity">
    <text evidence="5">Belongs to the isocitrate and isopropylmalate dehydrogenases family.</text>
</comment>
<reference key="1">
    <citation type="submission" date="2003-02" db="EMBL/GenBank/DDBJ databases">
        <title>Homoisocitrate dehydrogenase from Thermus thermophilus HB8.</title>
        <authorList>
            <person name="Miyazaki K."/>
        </authorList>
    </citation>
    <scope>NUCLEOTIDE SEQUENCE [GENOMIC DNA]</scope>
    <source>
        <strain>ATCC 27634 / DSM 579 / HB8</strain>
    </source>
</reference>
<reference key="2">
    <citation type="submission" date="2004-11" db="EMBL/GenBank/DDBJ databases">
        <title>Complete genome sequence of Thermus thermophilus HB8.</title>
        <authorList>
            <person name="Masui R."/>
            <person name="Kurokawa K."/>
            <person name="Nakagawa N."/>
            <person name="Tokunaga F."/>
            <person name="Koyama Y."/>
            <person name="Shibata T."/>
            <person name="Oshima T."/>
            <person name="Yokoyama S."/>
            <person name="Yasunaga T."/>
            <person name="Kuramitsu S."/>
        </authorList>
    </citation>
    <scope>NUCLEOTIDE SEQUENCE [LARGE SCALE GENOMIC DNA]</scope>
    <source>
        <strain>ATCC 27634 / DSM 579 / HB8</strain>
    </source>
</reference>
<reference key="3">
    <citation type="journal article" date="2011" name="J. Biochem.">
        <title>Structure of Thermus thermophilus homoisocitrate dehydrogenase in complex with a designed inhibitor.</title>
        <authorList>
            <person name="Nango E."/>
            <person name="Yamamoto T."/>
            <person name="Kumasaka T."/>
            <person name="Eguchi T."/>
        </authorList>
    </citation>
    <scope>X-RAY CRYSTALLOGRAPHY (2.60 ANGSTROMS) IN COMPLEX WITH THE SYNTHETIC INHIBITOR (2S,3S)-THIAHOMOISOCITRATE</scope>
    <scope>FUNCTION</scope>
    <scope>CATALYTIC ACTIVITY</scope>
    <scope>COFACTOR</scope>
    <scope>SUBUNIT</scope>
    <scope>ACTIVITY REGULATION</scope>
    <source>
        <strain>ATCC 27634 / DSM 579 / HB8</strain>
    </source>
</reference>
<name>HICDH_THET8</name>
<feature type="chain" id="PRO_0000422303" description="Isocitrate/homoisocitrate dehydrogenase">
    <location>
        <begin position="1"/>
        <end position="334"/>
    </location>
</feature>
<feature type="binding site" evidence="2">
    <location>
        <begin position="70"/>
        <end position="72"/>
    </location>
    <ligand>
        <name>NADH</name>
        <dbReference type="ChEBI" id="CHEBI:57945"/>
    </ligand>
</feature>
<feature type="binding site" description="in other chain" evidence="2">
    <location>
        <position position="72"/>
    </location>
    <ligand>
        <name>(2R,3S)-homoisocitrate</name>
        <dbReference type="ChEBI" id="CHEBI:15404"/>
        <note>ligand shared between homodimeric partners</note>
    </ligand>
</feature>
<feature type="binding site" description="in other chain" evidence="2">
    <location>
        <position position="85"/>
    </location>
    <ligand>
        <name>(2R,3S)-homoisocitrate</name>
        <dbReference type="ChEBI" id="CHEBI:15404"/>
        <note>ligand shared between homodimeric partners</note>
    </ligand>
</feature>
<feature type="binding site" description="in other chain" evidence="2">
    <location>
        <position position="88"/>
    </location>
    <ligand>
        <name>(2R,3S)-homoisocitrate</name>
        <dbReference type="ChEBI" id="CHEBI:15404"/>
        <note>ligand shared between homodimeric partners</note>
    </ligand>
</feature>
<feature type="binding site" description="in other chain" evidence="2">
    <location>
        <position position="98"/>
    </location>
    <ligand>
        <name>(2R,3S)-homoisocitrate</name>
        <dbReference type="ChEBI" id="CHEBI:15404"/>
        <note>ligand shared between homodimeric partners</note>
    </ligand>
</feature>
<feature type="binding site" description="in other chain" evidence="2">
    <location>
        <position position="118"/>
    </location>
    <ligand>
        <name>(2R,3S)-homoisocitrate</name>
        <dbReference type="ChEBI" id="CHEBI:15404"/>
        <note>ligand shared between homodimeric partners</note>
    </ligand>
</feature>
<feature type="binding site" description="in other chain" evidence="2">
    <location>
        <position position="125"/>
    </location>
    <ligand>
        <name>(2R,3S)-homoisocitrate</name>
        <dbReference type="ChEBI" id="CHEBI:15404"/>
        <note>ligand shared between homodimeric partners</note>
    </ligand>
</feature>
<feature type="binding site" evidence="2">
    <location>
        <position position="171"/>
    </location>
    <ligand>
        <name>(2R,3S)-homoisocitrate</name>
        <dbReference type="ChEBI" id="CHEBI:15404"/>
        <note>ligand shared between homodimeric partners</note>
    </ligand>
</feature>
<feature type="binding site" evidence="2">
    <location>
        <position position="173"/>
    </location>
    <ligand>
        <name>(2R,3S)-homoisocitrate</name>
        <dbReference type="ChEBI" id="CHEBI:15404"/>
        <note>ligand shared between homodimeric partners</note>
    </ligand>
</feature>
<feature type="binding site" evidence="2">
    <location>
        <position position="173"/>
    </location>
    <ligand>
        <name>NADH</name>
        <dbReference type="ChEBI" id="CHEBI:57945"/>
    </ligand>
</feature>
<feature type="binding site" evidence="2">
    <location>
        <position position="204"/>
    </location>
    <ligand>
        <name>Mg(2+)</name>
        <dbReference type="ChEBI" id="CHEBI:18420"/>
    </ligand>
</feature>
<feature type="binding site" evidence="2">
    <location>
        <position position="228"/>
    </location>
    <ligand>
        <name>Mg(2+)</name>
        <dbReference type="ChEBI" id="CHEBI:18420"/>
    </ligand>
</feature>
<feature type="binding site" evidence="2">
    <location>
        <position position="232"/>
    </location>
    <ligand>
        <name>Mg(2+)</name>
        <dbReference type="ChEBI" id="CHEBI:18420"/>
    </ligand>
</feature>
<feature type="binding site" evidence="2">
    <location>
        <begin position="261"/>
        <end position="265"/>
    </location>
    <ligand>
        <name>NADH</name>
        <dbReference type="ChEBI" id="CHEBI:57945"/>
    </ligand>
</feature>
<feature type="binding site" evidence="2">
    <location>
        <position position="273"/>
    </location>
    <ligand>
        <name>NADH</name>
        <dbReference type="ChEBI" id="CHEBI:57945"/>
    </ligand>
</feature>
<feature type="site" description="Important for substrate specificity and discrimination against 3-isopropylmalate" evidence="1">
    <location>
        <position position="85"/>
    </location>
</feature>
<feature type="strand" evidence="7">
    <location>
        <begin position="3"/>
        <end position="11"/>
    </location>
</feature>
<feature type="helix" evidence="7">
    <location>
        <begin position="14"/>
        <end position="27"/>
    </location>
</feature>
<feature type="strand" evidence="7">
    <location>
        <begin position="32"/>
        <end position="37"/>
    </location>
</feature>
<feature type="helix" evidence="7">
    <location>
        <begin position="41"/>
        <end position="45"/>
    </location>
</feature>
<feature type="helix" evidence="7">
    <location>
        <begin position="53"/>
        <end position="60"/>
    </location>
</feature>
<feature type="strand" evidence="7">
    <location>
        <begin position="62"/>
        <end position="69"/>
    </location>
</feature>
<feature type="helix" evidence="7">
    <location>
        <begin position="83"/>
        <end position="90"/>
    </location>
</feature>
<feature type="strand" evidence="7">
    <location>
        <begin position="95"/>
        <end position="101"/>
    </location>
</feature>
<feature type="strand" evidence="7">
    <location>
        <begin position="113"/>
        <end position="119"/>
    </location>
</feature>
<feature type="strand" evidence="7">
    <location>
        <begin position="121"/>
        <end position="123"/>
    </location>
</feature>
<feature type="helix" evidence="7">
    <location>
        <begin position="124"/>
        <end position="126"/>
    </location>
</feature>
<feature type="strand" evidence="7">
    <location>
        <begin position="129"/>
        <end position="132"/>
    </location>
</feature>
<feature type="strand" evidence="7">
    <location>
        <begin position="135"/>
        <end position="143"/>
    </location>
</feature>
<feature type="helix" evidence="7">
    <location>
        <begin position="144"/>
        <end position="159"/>
    </location>
</feature>
<feature type="strand" evidence="7">
    <location>
        <begin position="165"/>
        <end position="170"/>
    </location>
</feature>
<feature type="turn" evidence="7">
    <location>
        <begin position="172"/>
        <end position="174"/>
    </location>
</feature>
<feature type="turn" evidence="7">
    <location>
        <begin position="176"/>
        <end position="178"/>
    </location>
</feature>
<feature type="helix" evidence="7">
    <location>
        <begin position="179"/>
        <end position="189"/>
    </location>
</feature>
<feature type="helix" evidence="7">
    <location>
        <begin position="190"/>
        <end position="192"/>
    </location>
</feature>
<feature type="strand" evidence="7">
    <location>
        <begin position="197"/>
        <end position="202"/>
    </location>
</feature>
<feature type="helix" evidence="7">
    <location>
        <begin position="203"/>
        <end position="212"/>
    </location>
</feature>
<feature type="helix" evidence="7">
    <location>
        <begin position="214"/>
        <end position="216"/>
    </location>
</feature>
<feature type="strand" evidence="7">
    <location>
        <begin position="218"/>
        <end position="222"/>
    </location>
</feature>
<feature type="helix" evidence="7">
    <location>
        <begin position="224"/>
        <end position="236"/>
    </location>
</feature>
<feature type="helix" evidence="7">
    <location>
        <begin position="241"/>
        <end position="243"/>
    </location>
</feature>
<feature type="strand" evidence="7">
    <location>
        <begin position="247"/>
        <end position="249"/>
    </location>
</feature>
<feature type="strand" evidence="7">
    <location>
        <begin position="254"/>
        <end position="256"/>
    </location>
</feature>
<feature type="turn" evidence="7">
    <location>
        <begin position="264"/>
        <end position="268"/>
    </location>
</feature>
<feature type="helix" evidence="7">
    <location>
        <begin position="275"/>
        <end position="288"/>
    </location>
</feature>
<feature type="helix" evidence="7">
    <location>
        <begin position="291"/>
        <end position="307"/>
    </location>
</feature>
<feature type="helix" evidence="7">
    <location>
        <begin position="312"/>
        <end position="314"/>
    </location>
</feature>
<feature type="helix" evidence="7">
    <location>
        <begin position="320"/>
        <end position="331"/>
    </location>
</feature>
<keyword id="KW-0002">3D-structure</keyword>
<keyword id="KW-0028">Amino-acid biosynthesis</keyword>
<keyword id="KW-0457">Lysine biosynthesis</keyword>
<keyword id="KW-0460">Magnesium</keyword>
<keyword id="KW-0479">Metal-binding</keyword>
<keyword id="KW-0520">NAD</keyword>
<keyword id="KW-0560">Oxidoreductase</keyword>
<keyword id="KW-1185">Reference proteome</keyword>
<accession>Q5SIJ1</accession>
<accession>Q8RQU4</accession>
<dbReference type="EC" id="1.1.1.286" evidence="2"/>
<dbReference type="EMBL" id="AB104528">
    <property type="protein sequence ID" value="BAD06517.1"/>
    <property type="molecule type" value="Genomic_DNA"/>
</dbReference>
<dbReference type="EMBL" id="AP008226">
    <property type="protein sequence ID" value="BAD71201.1"/>
    <property type="molecule type" value="Genomic_DNA"/>
</dbReference>
<dbReference type="RefSeq" id="WP_011173431.1">
    <property type="nucleotide sequence ID" value="NC_006461.1"/>
</dbReference>
<dbReference type="RefSeq" id="YP_144644.1">
    <property type="nucleotide sequence ID" value="NC_006461.1"/>
</dbReference>
<dbReference type="PDB" id="3ASJ">
    <property type="method" value="X-ray"/>
    <property type="resolution" value="2.60 A"/>
    <property type="chains" value="A/B/C/D=1-334"/>
</dbReference>
<dbReference type="PDBsum" id="3ASJ"/>
<dbReference type="SMR" id="Q5SIJ1"/>
<dbReference type="EnsemblBacteria" id="BAD71201">
    <property type="protein sequence ID" value="BAD71201"/>
    <property type="gene ID" value="BAD71201"/>
</dbReference>
<dbReference type="GeneID" id="3169501"/>
<dbReference type="KEGG" id="ttj:TTHA1378"/>
<dbReference type="PATRIC" id="fig|300852.9.peg.1354"/>
<dbReference type="eggNOG" id="COG0473">
    <property type="taxonomic scope" value="Bacteria"/>
</dbReference>
<dbReference type="HOGENOM" id="CLU_031953_0_1_0"/>
<dbReference type="PhylomeDB" id="Q5SIJ1"/>
<dbReference type="BioCyc" id="MetaCyc:MONOMER-6726"/>
<dbReference type="BRENDA" id="1.1.1.87">
    <property type="organism ID" value="2305"/>
</dbReference>
<dbReference type="UniPathway" id="UPA00033">
    <property type="reaction ID" value="UER00030"/>
</dbReference>
<dbReference type="EvolutionaryTrace" id="Q5SIJ1"/>
<dbReference type="Proteomes" id="UP000000532">
    <property type="component" value="Chromosome"/>
</dbReference>
<dbReference type="GO" id="GO:0047046">
    <property type="term" value="F:homoisocitrate dehydrogenase activity"/>
    <property type="evidence" value="ECO:0007669"/>
    <property type="project" value="UniProtKB-EC"/>
</dbReference>
<dbReference type="GO" id="GO:0004449">
    <property type="term" value="F:isocitrate dehydrogenase (NAD+) activity"/>
    <property type="evidence" value="ECO:0007669"/>
    <property type="project" value="TreeGrafter"/>
</dbReference>
<dbReference type="GO" id="GO:0046872">
    <property type="term" value="F:metal ion binding"/>
    <property type="evidence" value="ECO:0007669"/>
    <property type="project" value="UniProtKB-KW"/>
</dbReference>
<dbReference type="GO" id="GO:0006102">
    <property type="term" value="P:isocitrate metabolic process"/>
    <property type="evidence" value="ECO:0007669"/>
    <property type="project" value="TreeGrafter"/>
</dbReference>
<dbReference type="GO" id="GO:0019878">
    <property type="term" value="P:lysine biosynthetic process via aminoadipic acid"/>
    <property type="evidence" value="ECO:0007669"/>
    <property type="project" value="UniProtKB-UniPathway"/>
</dbReference>
<dbReference type="GO" id="GO:0006099">
    <property type="term" value="P:tricarboxylic acid cycle"/>
    <property type="evidence" value="ECO:0007669"/>
    <property type="project" value="TreeGrafter"/>
</dbReference>
<dbReference type="FunFam" id="3.40.718.10:FF:000019">
    <property type="entry name" value="Homoisocitrate dehydrogenase"/>
    <property type="match status" value="1"/>
</dbReference>
<dbReference type="Gene3D" id="3.40.718.10">
    <property type="entry name" value="Isopropylmalate Dehydrogenase"/>
    <property type="match status" value="1"/>
</dbReference>
<dbReference type="InterPro" id="IPR024084">
    <property type="entry name" value="IsoPropMal-DH-like_dom"/>
</dbReference>
<dbReference type="PANTHER" id="PTHR11835">
    <property type="entry name" value="DECARBOXYLATING DEHYDROGENASES-ISOCITRATE, ISOPROPYLMALATE, TARTRATE"/>
    <property type="match status" value="1"/>
</dbReference>
<dbReference type="PANTHER" id="PTHR11835:SF34">
    <property type="entry name" value="ISOCITRATE DEHYDROGENASE [NAD] SUBUNIT ALPHA, MITOCHONDRIAL"/>
    <property type="match status" value="1"/>
</dbReference>
<dbReference type="Pfam" id="PF00180">
    <property type="entry name" value="Iso_dh"/>
    <property type="match status" value="1"/>
</dbReference>
<dbReference type="SMART" id="SM01329">
    <property type="entry name" value="Iso_dh"/>
    <property type="match status" value="1"/>
</dbReference>
<dbReference type="SUPFAM" id="SSF53659">
    <property type="entry name" value="Isocitrate/Isopropylmalate dehydrogenase-like"/>
    <property type="match status" value="1"/>
</dbReference>
<gene>
    <name type="primary">hicd</name>
    <name type="synonym">hdh</name>
    <name type="ordered locus">TTHA1378</name>
</gene>
<protein>
    <recommendedName>
        <fullName evidence="2">Isocitrate/homoisocitrate dehydrogenase</fullName>
        <ecNumber evidence="2">1.1.1.286</ecNumber>
    </recommendedName>
    <alternativeName>
        <fullName evidence="4">Homoisocitrate dehydrogenase</fullName>
        <shortName evidence="4">HICDH</shortName>
    </alternativeName>
</protein>